<organism>
    <name type="scientific">Mus musculus</name>
    <name type="common">Mouse</name>
    <dbReference type="NCBI Taxonomy" id="10090"/>
    <lineage>
        <taxon>Eukaryota</taxon>
        <taxon>Metazoa</taxon>
        <taxon>Chordata</taxon>
        <taxon>Craniata</taxon>
        <taxon>Vertebrata</taxon>
        <taxon>Euteleostomi</taxon>
        <taxon>Mammalia</taxon>
        <taxon>Eutheria</taxon>
        <taxon>Euarchontoglires</taxon>
        <taxon>Glires</taxon>
        <taxon>Rodentia</taxon>
        <taxon>Myomorpha</taxon>
        <taxon>Muroidea</taxon>
        <taxon>Muridae</taxon>
        <taxon>Murinae</taxon>
        <taxon>Mus</taxon>
        <taxon>Mus</taxon>
    </lineage>
</organism>
<protein>
    <recommendedName>
        <fullName>Homeobox protein CDX-4</fullName>
    </recommendedName>
    <alternativeName>
        <fullName>Caudal-type homeobox protein 4</fullName>
    </alternativeName>
</protein>
<reference key="1">
    <citation type="journal article" date="1993" name="Mech. Dev.">
        <title>Murine Cdx-4 bears striking similarities to the Drosophila caudal gene in its homeodomain sequence and early expression pattern.</title>
        <authorList>
            <person name="Gamer L.W."/>
            <person name="Wright C.V."/>
        </authorList>
    </citation>
    <scope>NUCLEOTIDE SEQUENCE [MRNA]</scope>
</reference>
<comment type="subcellular location">
    <subcellularLocation>
        <location>Nucleus</location>
    </subcellularLocation>
</comment>
<comment type="similarity">
    <text evidence="3">Belongs to the Caudal homeobox family.</text>
</comment>
<evidence type="ECO:0000255" key="1">
    <source>
        <dbReference type="PROSITE-ProRule" id="PRU00108"/>
    </source>
</evidence>
<evidence type="ECO:0000256" key="2">
    <source>
        <dbReference type="SAM" id="MobiDB-lite"/>
    </source>
</evidence>
<evidence type="ECO:0000305" key="3"/>
<dbReference type="EMBL" id="L08061">
    <property type="protein sequence ID" value="AAA16901.1"/>
    <property type="molecule type" value="mRNA"/>
</dbReference>
<dbReference type="CCDS" id="CCDS30328.1"/>
<dbReference type="PIR" id="A56676">
    <property type="entry name" value="A56676"/>
</dbReference>
<dbReference type="RefSeq" id="NP_031700.1">
    <property type="nucleotide sequence ID" value="NM_007674.3"/>
</dbReference>
<dbReference type="SMR" id="Q07424"/>
<dbReference type="BioGRID" id="198665">
    <property type="interactions" value="4"/>
</dbReference>
<dbReference type="FunCoup" id="Q07424">
    <property type="interactions" value="833"/>
</dbReference>
<dbReference type="IntAct" id="Q07424">
    <property type="interactions" value="3"/>
</dbReference>
<dbReference type="STRING" id="10090.ENSMUSP00000033689"/>
<dbReference type="GlyGen" id="Q07424">
    <property type="glycosylation" value="1 site"/>
</dbReference>
<dbReference type="iPTMnet" id="Q07424"/>
<dbReference type="PhosphoSitePlus" id="Q07424"/>
<dbReference type="PaxDb" id="10090-ENSMUSP00000033689"/>
<dbReference type="PeptideAtlas" id="Q07424"/>
<dbReference type="ProteomicsDB" id="280045"/>
<dbReference type="Antibodypedia" id="13757">
    <property type="antibodies" value="294 antibodies from 33 providers"/>
</dbReference>
<dbReference type="DNASU" id="12592"/>
<dbReference type="Ensembl" id="ENSMUST00000033689.3">
    <property type="protein sequence ID" value="ENSMUSP00000033689.3"/>
    <property type="gene ID" value="ENSMUSG00000031326.3"/>
</dbReference>
<dbReference type="GeneID" id="12592"/>
<dbReference type="KEGG" id="mmu:12592"/>
<dbReference type="UCSC" id="uc009tzk.1">
    <property type="organism name" value="mouse"/>
</dbReference>
<dbReference type="AGR" id="MGI:88362"/>
<dbReference type="CTD" id="1046"/>
<dbReference type="MGI" id="MGI:88362">
    <property type="gene designation" value="Cdx4"/>
</dbReference>
<dbReference type="VEuPathDB" id="HostDB:ENSMUSG00000031326"/>
<dbReference type="eggNOG" id="KOG0848">
    <property type="taxonomic scope" value="Eukaryota"/>
</dbReference>
<dbReference type="GeneTree" id="ENSGT00940000162554"/>
<dbReference type="HOGENOM" id="CLU_073177_0_0_1"/>
<dbReference type="InParanoid" id="Q07424"/>
<dbReference type="OMA" id="YPHMPGM"/>
<dbReference type="OrthoDB" id="6159439at2759"/>
<dbReference type="PhylomeDB" id="Q07424"/>
<dbReference type="TreeFam" id="TF351605"/>
<dbReference type="BioGRID-ORCS" id="12592">
    <property type="hits" value="1 hit in 77 CRISPR screens"/>
</dbReference>
<dbReference type="PRO" id="PR:Q07424"/>
<dbReference type="Proteomes" id="UP000000589">
    <property type="component" value="Chromosome X"/>
</dbReference>
<dbReference type="RNAct" id="Q07424">
    <property type="molecule type" value="protein"/>
</dbReference>
<dbReference type="Bgee" id="ENSMUSG00000031326">
    <property type="expression patterns" value="Expressed in embryonic post-anal tail and 25 other cell types or tissues"/>
</dbReference>
<dbReference type="ExpressionAtlas" id="Q07424">
    <property type="expression patterns" value="baseline and differential"/>
</dbReference>
<dbReference type="GO" id="GO:0005634">
    <property type="term" value="C:nucleus"/>
    <property type="evidence" value="ECO:0007669"/>
    <property type="project" value="UniProtKB-SubCell"/>
</dbReference>
<dbReference type="GO" id="GO:0001228">
    <property type="term" value="F:DNA-binding transcription activator activity, RNA polymerase II-specific"/>
    <property type="evidence" value="ECO:0007669"/>
    <property type="project" value="Ensembl"/>
</dbReference>
<dbReference type="GO" id="GO:0000978">
    <property type="term" value="F:RNA polymerase II cis-regulatory region sequence-specific DNA binding"/>
    <property type="evidence" value="ECO:0007669"/>
    <property type="project" value="Ensembl"/>
</dbReference>
<dbReference type="GO" id="GO:0009952">
    <property type="term" value="P:anterior/posterior pattern specification"/>
    <property type="evidence" value="ECO:0000316"/>
    <property type="project" value="MGI"/>
</dbReference>
<dbReference type="GO" id="GO:0001568">
    <property type="term" value="P:blood vessel development"/>
    <property type="evidence" value="ECO:0000316"/>
    <property type="project" value="MGI"/>
</dbReference>
<dbReference type="GO" id="GO:0060711">
    <property type="term" value="P:labyrinthine layer development"/>
    <property type="evidence" value="ECO:0000316"/>
    <property type="project" value="MGI"/>
</dbReference>
<dbReference type="GO" id="GO:0000122">
    <property type="term" value="P:negative regulation of transcription by RNA polymerase II"/>
    <property type="evidence" value="ECO:0000316"/>
    <property type="project" value="MGI"/>
</dbReference>
<dbReference type="GO" id="GO:0001890">
    <property type="term" value="P:placenta development"/>
    <property type="evidence" value="ECO:0000316"/>
    <property type="project" value="MGI"/>
</dbReference>
<dbReference type="CDD" id="cd00086">
    <property type="entry name" value="homeodomain"/>
    <property type="match status" value="1"/>
</dbReference>
<dbReference type="FunFam" id="1.10.10.60:FF:000089">
    <property type="entry name" value="Caudal type homeobox 4"/>
    <property type="match status" value="1"/>
</dbReference>
<dbReference type="Gene3D" id="1.10.10.60">
    <property type="entry name" value="Homeodomain-like"/>
    <property type="match status" value="1"/>
</dbReference>
<dbReference type="InterPro" id="IPR006820">
    <property type="entry name" value="Caudal_activation_dom"/>
</dbReference>
<dbReference type="InterPro" id="IPR047152">
    <property type="entry name" value="Caudal_homeobox"/>
</dbReference>
<dbReference type="InterPro" id="IPR001356">
    <property type="entry name" value="HD"/>
</dbReference>
<dbReference type="InterPro" id="IPR020479">
    <property type="entry name" value="HD_metazoa"/>
</dbReference>
<dbReference type="InterPro" id="IPR017970">
    <property type="entry name" value="Homeobox_CS"/>
</dbReference>
<dbReference type="InterPro" id="IPR009057">
    <property type="entry name" value="Homeodomain-like_sf"/>
</dbReference>
<dbReference type="InterPro" id="IPR000047">
    <property type="entry name" value="HTH_motif"/>
</dbReference>
<dbReference type="PANTHER" id="PTHR24332">
    <property type="entry name" value="HOMEOBOX PROTEIN CDX"/>
    <property type="match status" value="1"/>
</dbReference>
<dbReference type="PANTHER" id="PTHR24332:SF15">
    <property type="entry name" value="HOMEOBOX PROTEIN CDX-4"/>
    <property type="match status" value="1"/>
</dbReference>
<dbReference type="Pfam" id="PF04731">
    <property type="entry name" value="Caudal_act"/>
    <property type="match status" value="1"/>
</dbReference>
<dbReference type="Pfam" id="PF00046">
    <property type="entry name" value="Homeodomain"/>
    <property type="match status" value="1"/>
</dbReference>
<dbReference type="PRINTS" id="PR00024">
    <property type="entry name" value="HOMEOBOX"/>
</dbReference>
<dbReference type="PRINTS" id="PR00031">
    <property type="entry name" value="HTHREPRESSR"/>
</dbReference>
<dbReference type="SMART" id="SM00389">
    <property type="entry name" value="HOX"/>
    <property type="match status" value="1"/>
</dbReference>
<dbReference type="SUPFAM" id="SSF46689">
    <property type="entry name" value="Homeodomain-like"/>
    <property type="match status" value="1"/>
</dbReference>
<dbReference type="PROSITE" id="PS00027">
    <property type="entry name" value="HOMEOBOX_1"/>
    <property type="match status" value="1"/>
</dbReference>
<dbReference type="PROSITE" id="PS50071">
    <property type="entry name" value="HOMEOBOX_2"/>
    <property type="match status" value="1"/>
</dbReference>
<accession>Q07424</accession>
<proteinExistence type="evidence at transcript level"/>
<sequence>MYGSCLLEKEAGMYPGTLRSPGGSSTAGVGTSGGSGSPLPASNFTAAPVYPHYVGYPHMSNMDPHGPSLGAWSSPYSPPREDWSTYPGPPSTMGTVPMNDMTSPVFGSPDYSTLGPTSGASNGGSLPDAASESLVSLDSGTSGATSPSRSRHSPYAWMRKTVQVTGKTRTKEKYRVVYTDHQRLELEKEFHCNRYITIRRKSELAVNLGLSERQVKIWFQNRRAKERKMIKKKISQFENTGGSVQSDSGSISPGELPNAFFTTPSAVRGFQPIEIQQVIVSE</sequence>
<name>CDX4_MOUSE</name>
<keyword id="KW-0217">Developmental protein</keyword>
<keyword id="KW-0238">DNA-binding</keyword>
<keyword id="KW-0371">Homeobox</keyword>
<keyword id="KW-0539">Nucleus</keyword>
<keyword id="KW-1185">Reference proteome</keyword>
<keyword id="KW-0804">Transcription</keyword>
<keyword id="KW-0805">Transcription regulation</keyword>
<gene>
    <name type="primary">Cdx4</name>
    <name type="synonym">Cdx-4</name>
</gene>
<feature type="chain" id="PRO_0000048853" description="Homeobox protein CDX-4">
    <location>
        <begin position="1"/>
        <end position="282"/>
    </location>
</feature>
<feature type="DNA-binding region" description="Homeobox" evidence="1">
    <location>
        <begin position="171"/>
        <end position="230"/>
    </location>
</feature>
<feature type="region of interest" description="Disordered" evidence="2">
    <location>
        <begin position="13"/>
        <end position="36"/>
    </location>
</feature>
<feature type="region of interest" description="Disordered" evidence="2">
    <location>
        <begin position="98"/>
        <end position="156"/>
    </location>
</feature>
<feature type="compositionally biased region" description="Low complexity" evidence="2">
    <location>
        <begin position="20"/>
        <end position="29"/>
    </location>
</feature>
<feature type="compositionally biased region" description="Polar residues" evidence="2">
    <location>
        <begin position="110"/>
        <end position="124"/>
    </location>
</feature>
<feature type="compositionally biased region" description="Polar residues" evidence="2">
    <location>
        <begin position="133"/>
        <end position="148"/>
    </location>
</feature>